<organism>
    <name type="scientific">Mus caroli</name>
    <name type="common">Ryukyu mouse</name>
    <name type="synonym">Ricefield mouse</name>
    <dbReference type="NCBI Taxonomy" id="10089"/>
    <lineage>
        <taxon>Eukaryota</taxon>
        <taxon>Metazoa</taxon>
        <taxon>Chordata</taxon>
        <taxon>Craniata</taxon>
        <taxon>Vertebrata</taxon>
        <taxon>Euteleostomi</taxon>
        <taxon>Mammalia</taxon>
        <taxon>Eutheria</taxon>
        <taxon>Euarchontoglires</taxon>
        <taxon>Glires</taxon>
        <taxon>Rodentia</taxon>
        <taxon>Myomorpha</taxon>
        <taxon>Muroidea</taxon>
        <taxon>Muridae</taxon>
        <taxon>Murinae</taxon>
        <taxon>Mus</taxon>
        <taxon>Mus</taxon>
    </lineage>
</organism>
<feature type="signal peptide">
    <location>
        <begin position="1"/>
        <end position="18"/>
    </location>
</feature>
<feature type="chain" id="PRO_0000017866" description="Alpha-1-acid glycoprotein 8">
    <location>
        <begin position="19"/>
        <end position="207"/>
    </location>
</feature>
<feature type="glycosylation site" description="N-linked (GlcNAc...) asparagine" evidence="2">
    <location>
        <position position="25"/>
    </location>
</feature>
<feature type="glycosylation site" description="N-linked (GlcNAc...) asparagine" evidence="2">
    <location>
        <position position="34"/>
    </location>
</feature>
<feature type="glycosylation site" description="N-linked (GlcNAc...) asparagine" evidence="2">
    <location>
        <position position="76"/>
    </location>
</feature>
<feature type="glycosylation site" description="N-linked (GlcNAc...) asparagine" evidence="2">
    <location>
        <position position="94"/>
    </location>
</feature>
<feature type="glycosylation site" description="N-linked (GlcNAc...) asparagine" evidence="2">
    <location>
        <position position="104"/>
    </location>
</feature>
<feature type="disulfide bond" evidence="1">
    <location>
        <begin position="91"/>
        <end position="184"/>
    </location>
</feature>
<feature type="sequence variant">
    <original>L</original>
    <variation>V</variation>
    <location>
        <position position="10"/>
    </location>
</feature>
<feature type="sequence variant">
    <original>A</original>
    <variation>V</variation>
    <location>
        <position position="24"/>
    </location>
</feature>
<feature type="sequence variant">
    <original>A</original>
    <variation>R</variation>
    <location>
        <position position="50"/>
    </location>
</feature>
<feature type="sequence variant">
    <original>L</original>
    <variation>V</variation>
    <location>
        <position position="98"/>
    </location>
</feature>
<proteinExistence type="evidence at transcript level"/>
<name>A1AG8_MUSCR</name>
<gene>
    <name type="primary">Orm8</name>
    <name type="synonym">Agp-8</name>
    <name type="synonym">Orm-8</name>
</gene>
<protein>
    <recommendedName>
        <fullName>Alpha-1-acid glycoprotein 8</fullName>
        <shortName>AGP 8</shortName>
    </recommendedName>
    <alternativeName>
        <fullName>Orosomucoid-8</fullName>
        <shortName>OMD 8</shortName>
    </alternativeName>
</protein>
<reference key="1">
    <citation type="journal article" date="1990" name="J. Biol. Chem.">
        <title>Molecular characterization and acute phase expression of the multiple Mus caroli alpha 1-acid glycoprotein (AGP) genes. Differences in glucocorticoid stimulation and regulatory elements between the rat and mouse AGP genes.</title>
        <authorList>
            <person name="Prowse K.R."/>
            <person name="Baumann H."/>
        </authorList>
    </citation>
    <scope>NUCLEOTIDE SEQUENCE [MRNA]</scope>
    <source>
        <tissue>Liver</tissue>
    </source>
</reference>
<sequence>MALHTVLIMLSLLPMLEAQNPEHANITIGEPITNETLGWLSDKWFFMGAAFRKLEYRQAIQMMQTEFFYLTTNLINDTIELRESQTIGDQCVYNSTHLGFQRENGTFSKYEGGVETFAHLIVLRKHGAFMLAFDLNDEKKRGLSLYAKRPDMTLELREVFQKAVKHVGMDESEIIFVDWKKDKCGQQEKKQLELGKETKKDPEEGQA</sequence>
<dbReference type="EMBL" id="M34649">
    <property type="protein sequence ID" value="AAA37198.1"/>
    <property type="molecule type" value="mRNA"/>
</dbReference>
<dbReference type="EMBL" id="M34646">
    <property type="protein sequence ID" value="AAB67844.1"/>
    <property type="molecule type" value="mRNA"/>
</dbReference>
<dbReference type="PIR" id="C35425">
    <property type="entry name" value="C35425"/>
</dbReference>
<dbReference type="PIR" id="D35425">
    <property type="entry name" value="D35425"/>
</dbReference>
<dbReference type="SMR" id="P21352"/>
<dbReference type="GlyCosmos" id="P21352">
    <property type="glycosylation" value="5 sites, No reported glycans"/>
</dbReference>
<dbReference type="Proteomes" id="UP000515126">
    <property type="component" value="Unplaced"/>
</dbReference>
<dbReference type="GO" id="GO:0005615">
    <property type="term" value="C:extracellular space"/>
    <property type="evidence" value="ECO:0007669"/>
    <property type="project" value="InterPro"/>
</dbReference>
<dbReference type="GO" id="GO:0006953">
    <property type="term" value="P:acute-phase response"/>
    <property type="evidence" value="ECO:0007669"/>
    <property type="project" value="UniProtKB-KW"/>
</dbReference>
<dbReference type="GO" id="GO:0002682">
    <property type="term" value="P:regulation of immune system process"/>
    <property type="evidence" value="ECO:0007669"/>
    <property type="project" value="InterPro"/>
</dbReference>
<dbReference type="CDD" id="cd19451">
    <property type="entry name" value="lipocalin_AGP-like"/>
    <property type="match status" value="1"/>
</dbReference>
<dbReference type="FunFam" id="2.40.128.20:FF:000012">
    <property type="entry name" value="Alpha-1-acid glycoprotein 2"/>
    <property type="match status" value="1"/>
</dbReference>
<dbReference type="Gene3D" id="2.40.128.20">
    <property type="match status" value="1"/>
</dbReference>
<dbReference type="InterPro" id="IPR001500">
    <property type="entry name" value="A1A_glycop"/>
</dbReference>
<dbReference type="InterPro" id="IPR012674">
    <property type="entry name" value="Calycin"/>
</dbReference>
<dbReference type="InterPro" id="IPR000566">
    <property type="entry name" value="Lipocln_cytosolic_FA-bd_dom"/>
</dbReference>
<dbReference type="PANTHER" id="PTHR11967">
    <property type="entry name" value="ALPHA-1-ACID GLYCOPROTEIN"/>
    <property type="match status" value="1"/>
</dbReference>
<dbReference type="PANTHER" id="PTHR11967:SF2">
    <property type="entry name" value="ALPHA-1-ACID GLYCOPROTEIN 1"/>
    <property type="match status" value="1"/>
</dbReference>
<dbReference type="Pfam" id="PF00061">
    <property type="entry name" value="Lipocalin"/>
    <property type="match status" value="1"/>
</dbReference>
<dbReference type="PIRSF" id="PIRSF036899">
    <property type="entry name" value="AGP"/>
    <property type="match status" value="1"/>
</dbReference>
<dbReference type="PRINTS" id="PR00708">
    <property type="entry name" value="A1AGLPROTEIN"/>
</dbReference>
<dbReference type="SUPFAM" id="SSF50814">
    <property type="entry name" value="Lipocalins"/>
    <property type="match status" value="1"/>
</dbReference>
<accession>P21352</accession>
<comment type="function">
    <text evidence="1">Functions as a transport protein in the blood stream. Binds various ligands in the interior of its beta-barrel domain (By similarity). Appears to function in modulating the activity of the immune system during the acute-phase reaction.</text>
</comment>
<comment type="subcellular location">
    <subcellularLocation>
        <location>Secreted</location>
    </subcellularLocation>
</comment>
<comment type="tissue specificity">
    <text>Expressed by the liver and secreted in plasma.</text>
</comment>
<comment type="domain">
    <text evidence="1">Contains a beta-barrel that binds various ligands in its interior.</text>
</comment>
<comment type="miscellaneous">
    <text>Eight genes coding for different forms of alpha-1-AGP are present in mus carolis.</text>
</comment>
<comment type="similarity">
    <text evidence="3">Belongs to the calycin superfamily. Lipocalin family.</text>
</comment>
<keyword id="KW-0011">Acute phase</keyword>
<keyword id="KW-1015">Disulfide bond</keyword>
<keyword id="KW-0325">Glycoprotein</keyword>
<keyword id="KW-0964">Secreted</keyword>
<keyword id="KW-0732">Signal</keyword>
<keyword id="KW-0813">Transport</keyword>
<evidence type="ECO:0000250" key="1"/>
<evidence type="ECO:0000255" key="2"/>
<evidence type="ECO:0000305" key="3"/>